<gene>
    <name type="ordered locus">Shewana3_2780</name>
</gene>
<name>PHS_SHESA</name>
<accession>A0KYY8</accession>
<protein>
    <recommendedName>
        <fullName evidence="1">Putative pterin-4-alpha-carbinolamine dehydratase</fullName>
        <shortName evidence="1">PHS</shortName>
        <ecNumber evidence="1">4.2.1.96</ecNumber>
    </recommendedName>
    <alternativeName>
        <fullName evidence="1">4-alpha-hydroxy-tetrahydropterin dehydratase</fullName>
    </alternativeName>
    <alternativeName>
        <fullName evidence="1">Pterin carbinolamine dehydratase</fullName>
        <shortName evidence="1">PCD</shortName>
    </alternativeName>
</protein>
<proteinExistence type="inferred from homology"/>
<dbReference type="EC" id="4.2.1.96" evidence="1"/>
<dbReference type="EMBL" id="CP000469">
    <property type="protein sequence ID" value="ABK49007.1"/>
    <property type="molecule type" value="Genomic_DNA"/>
</dbReference>
<dbReference type="RefSeq" id="WP_011717659.1">
    <property type="nucleotide sequence ID" value="NC_008577.1"/>
</dbReference>
<dbReference type="SMR" id="A0KYY8"/>
<dbReference type="STRING" id="94122.Shewana3_2780"/>
<dbReference type="KEGG" id="shn:Shewana3_2780"/>
<dbReference type="eggNOG" id="COG2154">
    <property type="taxonomic scope" value="Bacteria"/>
</dbReference>
<dbReference type="HOGENOM" id="CLU_081974_2_2_6"/>
<dbReference type="OrthoDB" id="5294615at2"/>
<dbReference type="Proteomes" id="UP000002589">
    <property type="component" value="Chromosome"/>
</dbReference>
<dbReference type="GO" id="GO:0008124">
    <property type="term" value="F:4-alpha-hydroxytetrahydrobiopterin dehydratase activity"/>
    <property type="evidence" value="ECO:0007669"/>
    <property type="project" value="UniProtKB-UniRule"/>
</dbReference>
<dbReference type="GO" id="GO:0006729">
    <property type="term" value="P:tetrahydrobiopterin biosynthetic process"/>
    <property type="evidence" value="ECO:0007669"/>
    <property type="project" value="InterPro"/>
</dbReference>
<dbReference type="CDD" id="cd00913">
    <property type="entry name" value="PCD_DCoH_subfamily_a"/>
    <property type="match status" value="1"/>
</dbReference>
<dbReference type="Gene3D" id="3.30.1360.20">
    <property type="entry name" value="Transcriptional coactivator/pterin dehydratase"/>
    <property type="match status" value="1"/>
</dbReference>
<dbReference type="HAMAP" id="MF_00434">
    <property type="entry name" value="Pterin_4_alpha"/>
    <property type="match status" value="1"/>
</dbReference>
<dbReference type="InterPro" id="IPR036428">
    <property type="entry name" value="PCD_sf"/>
</dbReference>
<dbReference type="InterPro" id="IPR050376">
    <property type="entry name" value="Pterin-4-alpha-carb_dehyd"/>
</dbReference>
<dbReference type="InterPro" id="IPR001533">
    <property type="entry name" value="Pterin_deHydtase"/>
</dbReference>
<dbReference type="NCBIfam" id="NF002016">
    <property type="entry name" value="PRK00823.1-1"/>
    <property type="match status" value="1"/>
</dbReference>
<dbReference type="PANTHER" id="PTHR42805">
    <property type="entry name" value="PTERIN-4-ALPHA-CARBINOLAMINE DEHYDRATASE-RELATED"/>
    <property type="match status" value="1"/>
</dbReference>
<dbReference type="PANTHER" id="PTHR42805:SF1">
    <property type="entry name" value="PTERIN-4-ALPHA-CARBINOLAMINE DEHYDRATASE-RELATED"/>
    <property type="match status" value="1"/>
</dbReference>
<dbReference type="Pfam" id="PF01329">
    <property type="entry name" value="Pterin_4a"/>
    <property type="match status" value="1"/>
</dbReference>
<dbReference type="SUPFAM" id="SSF55248">
    <property type="entry name" value="PCD-like"/>
    <property type="match status" value="1"/>
</dbReference>
<sequence length="112" mass="12808">MTALTQMKCEACQADAPKVTDAELAELIRMVPDWGVQVRDGIMQLERVYKFKNFKLAMAFTNKLADLAEEEFHHPGILTEWGKVTVTWWSHSIKGLHKNDFIMAAKTDQLLD</sequence>
<feature type="chain" id="PRO_1000050459" description="Putative pterin-4-alpha-carbinolamine dehydratase">
    <location>
        <begin position="1"/>
        <end position="112"/>
    </location>
</feature>
<comment type="catalytic activity">
    <reaction evidence="1">
        <text>(4aS,6R)-4a-hydroxy-L-erythro-5,6,7,8-tetrahydrobiopterin = (6R)-L-erythro-6,7-dihydrobiopterin + H2O</text>
        <dbReference type="Rhea" id="RHEA:11920"/>
        <dbReference type="ChEBI" id="CHEBI:15377"/>
        <dbReference type="ChEBI" id="CHEBI:15642"/>
        <dbReference type="ChEBI" id="CHEBI:43120"/>
        <dbReference type="EC" id="4.2.1.96"/>
    </reaction>
</comment>
<comment type="similarity">
    <text evidence="1">Belongs to the pterin-4-alpha-carbinolamine dehydratase family.</text>
</comment>
<organism>
    <name type="scientific">Shewanella sp. (strain ANA-3)</name>
    <dbReference type="NCBI Taxonomy" id="94122"/>
    <lineage>
        <taxon>Bacteria</taxon>
        <taxon>Pseudomonadati</taxon>
        <taxon>Pseudomonadota</taxon>
        <taxon>Gammaproteobacteria</taxon>
        <taxon>Alteromonadales</taxon>
        <taxon>Shewanellaceae</taxon>
        <taxon>Shewanella</taxon>
    </lineage>
</organism>
<keyword id="KW-0456">Lyase</keyword>
<reference key="1">
    <citation type="submission" date="2006-09" db="EMBL/GenBank/DDBJ databases">
        <title>Complete sequence of chromosome 1 of Shewanella sp. ANA-3.</title>
        <authorList>
            <person name="Copeland A."/>
            <person name="Lucas S."/>
            <person name="Lapidus A."/>
            <person name="Barry K."/>
            <person name="Detter J.C."/>
            <person name="Glavina del Rio T."/>
            <person name="Hammon N."/>
            <person name="Israni S."/>
            <person name="Dalin E."/>
            <person name="Tice H."/>
            <person name="Pitluck S."/>
            <person name="Chertkov O."/>
            <person name="Brettin T."/>
            <person name="Bruce D."/>
            <person name="Han C."/>
            <person name="Tapia R."/>
            <person name="Gilna P."/>
            <person name="Schmutz J."/>
            <person name="Larimer F."/>
            <person name="Land M."/>
            <person name="Hauser L."/>
            <person name="Kyrpides N."/>
            <person name="Kim E."/>
            <person name="Newman D."/>
            <person name="Salticov C."/>
            <person name="Konstantinidis K."/>
            <person name="Klappenback J."/>
            <person name="Tiedje J."/>
            <person name="Richardson P."/>
        </authorList>
    </citation>
    <scope>NUCLEOTIDE SEQUENCE [LARGE SCALE GENOMIC DNA]</scope>
    <source>
        <strain>ANA-3</strain>
    </source>
</reference>
<evidence type="ECO:0000255" key="1">
    <source>
        <dbReference type="HAMAP-Rule" id="MF_00434"/>
    </source>
</evidence>